<organism>
    <name type="scientific">Vibrio cholerae serotype O1 (strain ATCC 39315 / El Tor Inaba N16961)</name>
    <dbReference type="NCBI Taxonomy" id="243277"/>
    <lineage>
        <taxon>Bacteria</taxon>
        <taxon>Pseudomonadati</taxon>
        <taxon>Pseudomonadota</taxon>
        <taxon>Gammaproteobacteria</taxon>
        <taxon>Vibrionales</taxon>
        <taxon>Vibrionaceae</taxon>
        <taxon>Vibrio</taxon>
    </lineage>
</organism>
<name>FADR_VIBCH</name>
<reference key="1">
    <citation type="journal article" date="2003" name="J. Bacteriol.">
        <title>Roles of NhaA, NhaB, and NhaD Na(+)/H(+) antiporters in survival of Vibrio cholerae in a saline environment.</title>
        <authorList>
            <person name="Herz K."/>
            <person name="Vimont S."/>
            <person name="Padan E."/>
            <person name="Berche P."/>
        </authorList>
    </citation>
    <scope>NUCLEOTIDE SEQUENCE [GENOMIC DNA]</scope>
</reference>
<reference key="2">
    <citation type="journal article" date="2000" name="Nature">
        <title>DNA sequence of both chromosomes of the cholera pathogen Vibrio cholerae.</title>
        <authorList>
            <person name="Heidelberg J.F."/>
            <person name="Eisen J.A."/>
            <person name="Nelson W.C."/>
            <person name="Clayton R.A."/>
            <person name="Gwinn M.L."/>
            <person name="Dodson R.J."/>
            <person name="Haft D.H."/>
            <person name="Hickey E.K."/>
            <person name="Peterson J.D."/>
            <person name="Umayam L.A."/>
            <person name="Gill S.R."/>
            <person name="Nelson K.E."/>
            <person name="Read T.D."/>
            <person name="Tettelin H."/>
            <person name="Richardson D.L."/>
            <person name="Ermolaeva M.D."/>
            <person name="Vamathevan J.J."/>
            <person name="Bass S."/>
            <person name="Qin H."/>
            <person name="Dragoi I."/>
            <person name="Sellers P."/>
            <person name="McDonald L.A."/>
            <person name="Utterback T.R."/>
            <person name="Fleischmann R.D."/>
            <person name="Nierman W.C."/>
            <person name="White O."/>
            <person name="Salzberg S.L."/>
            <person name="Smith H.O."/>
            <person name="Colwell R.R."/>
            <person name="Mekalanos J.J."/>
            <person name="Venter J.C."/>
            <person name="Fraser C.M."/>
        </authorList>
    </citation>
    <scope>NUCLEOTIDE SEQUENCE [LARGE SCALE GENOMIC DNA]</scope>
    <source>
        <strain>ATCC 39315 / El Tor Inaba N16961</strain>
    </source>
</reference>
<proteinExistence type="evidence at protein level"/>
<keyword id="KW-0002">3D-structure</keyword>
<keyword id="KW-0010">Activator</keyword>
<keyword id="KW-0963">Cytoplasm</keyword>
<keyword id="KW-0238">DNA-binding</keyword>
<keyword id="KW-0276">Fatty acid metabolism</keyword>
<keyword id="KW-0443">Lipid metabolism</keyword>
<keyword id="KW-1185">Reference proteome</keyword>
<keyword id="KW-0678">Repressor</keyword>
<keyword id="KW-0804">Transcription</keyword>
<keyword id="KW-0805">Transcription regulation</keyword>
<feature type="chain" id="PRO_0000050636" description="Fatty acid metabolism regulator protein">
    <location>
        <begin position="1"/>
        <end position="279"/>
    </location>
</feature>
<feature type="domain" description="HTH gntR-type" evidence="1">
    <location>
        <begin position="6"/>
        <end position="74"/>
    </location>
</feature>
<feature type="DNA-binding region" description="H-T-H motif" evidence="1">
    <location>
        <begin position="34"/>
        <end position="53"/>
    </location>
</feature>
<feature type="helix" evidence="3">
    <location>
        <begin position="9"/>
        <end position="21"/>
    </location>
</feature>
<feature type="helix" evidence="3">
    <location>
        <begin position="35"/>
        <end position="40"/>
    </location>
</feature>
<feature type="helix" evidence="3">
    <location>
        <begin position="48"/>
        <end position="58"/>
    </location>
</feature>
<feature type="strand" evidence="2">
    <location>
        <begin position="60"/>
        <end position="62"/>
    </location>
</feature>
<feature type="strand" evidence="3">
    <location>
        <begin position="65"/>
        <end position="67"/>
    </location>
</feature>
<feature type="strand" evidence="3">
    <location>
        <begin position="75"/>
        <end position="77"/>
    </location>
</feature>
<feature type="strand" evidence="3">
    <location>
        <begin position="88"/>
        <end position="90"/>
    </location>
</feature>
<feature type="turn" evidence="3">
    <location>
        <begin position="91"/>
        <end position="93"/>
    </location>
</feature>
<feature type="helix" evidence="3">
    <location>
        <begin position="97"/>
        <end position="119"/>
    </location>
</feature>
<feature type="helix" evidence="3">
    <location>
        <begin position="121"/>
        <end position="139"/>
    </location>
</feature>
<feature type="strand" evidence="3">
    <location>
        <begin position="141"/>
        <end position="143"/>
    </location>
</feature>
<feature type="helix" evidence="3">
    <location>
        <begin position="144"/>
        <end position="150"/>
    </location>
</feature>
<feature type="helix" evidence="3">
    <location>
        <begin position="154"/>
        <end position="160"/>
    </location>
</feature>
<feature type="helix" evidence="3">
    <location>
        <begin position="169"/>
        <end position="194"/>
    </location>
</feature>
<feature type="helix" evidence="3">
    <location>
        <begin position="199"/>
        <end position="207"/>
    </location>
</feature>
<feature type="helix" evidence="3">
    <location>
        <begin position="209"/>
        <end position="219"/>
    </location>
</feature>
<feature type="helix" evidence="3">
    <location>
        <begin position="223"/>
        <end position="242"/>
    </location>
</feature>
<feature type="helix" evidence="3">
    <location>
        <begin position="248"/>
        <end position="263"/>
    </location>
</feature>
<dbReference type="EMBL" id="AF489522">
    <property type="protein sequence ID" value="AAO37924.1"/>
    <property type="molecule type" value="Genomic_DNA"/>
</dbReference>
<dbReference type="EMBL" id="AE003852">
    <property type="protein sequence ID" value="AAF95048.1"/>
    <property type="molecule type" value="Genomic_DNA"/>
</dbReference>
<dbReference type="PIR" id="B82144">
    <property type="entry name" value="B82144"/>
</dbReference>
<dbReference type="RefSeq" id="NP_231534.1">
    <property type="nucleotide sequence ID" value="NC_002505.1"/>
</dbReference>
<dbReference type="RefSeq" id="WP_000234820.1">
    <property type="nucleotide sequence ID" value="NZ_LT906614.1"/>
</dbReference>
<dbReference type="PDB" id="4P9U">
    <property type="method" value="X-ray"/>
    <property type="resolution" value="3.21 A"/>
    <property type="chains" value="A/B/E/F=6-277"/>
</dbReference>
<dbReference type="PDB" id="4PDK">
    <property type="method" value="X-ray"/>
    <property type="resolution" value="2.80 A"/>
    <property type="chains" value="A/B=1-279"/>
</dbReference>
<dbReference type="PDB" id="8Y3Z">
    <property type="method" value="X-ray"/>
    <property type="resolution" value="2.50 A"/>
    <property type="chains" value="A/B=1-279"/>
</dbReference>
<dbReference type="PDB" id="8Y41">
    <property type="method" value="X-ray"/>
    <property type="resolution" value="2.58 A"/>
    <property type="chains" value="A/D=1-279"/>
</dbReference>
<dbReference type="PDBsum" id="4P9U"/>
<dbReference type="PDBsum" id="4PDK"/>
<dbReference type="PDBsum" id="8Y3Z"/>
<dbReference type="PDBsum" id="8Y41"/>
<dbReference type="SMR" id="Q9KQU8"/>
<dbReference type="STRING" id="243277.VC_1900"/>
<dbReference type="DNASU" id="2613529"/>
<dbReference type="EnsemblBacteria" id="AAF95048">
    <property type="protein sequence ID" value="AAF95048"/>
    <property type="gene ID" value="VC_1900"/>
</dbReference>
<dbReference type="GeneID" id="69719471"/>
<dbReference type="KEGG" id="vch:VC_1900"/>
<dbReference type="PATRIC" id="fig|243277.26.peg.1816"/>
<dbReference type="eggNOG" id="COG2186">
    <property type="taxonomic scope" value="Bacteria"/>
</dbReference>
<dbReference type="HOGENOM" id="CLU_017584_9_4_6"/>
<dbReference type="EvolutionaryTrace" id="Q9KQU8"/>
<dbReference type="Proteomes" id="UP000000584">
    <property type="component" value="Chromosome 1"/>
</dbReference>
<dbReference type="GO" id="GO:0005737">
    <property type="term" value="C:cytoplasm"/>
    <property type="evidence" value="ECO:0007669"/>
    <property type="project" value="UniProtKB-SubCell"/>
</dbReference>
<dbReference type="GO" id="GO:0003677">
    <property type="term" value="F:DNA binding"/>
    <property type="evidence" value="ECO:0007669"/>
    <property type="project" value="UniProtKB-KW"/>
</dbReference>
<dbReference type="GO" id="GO:0003700">
    <property type="term" value="F:DNA-binding transcription factor activity"/>
    <property type="evidence" value="ECO:0007669"/>
    <property type="project" value="UniProtKB-UniRule"/>
</dbReference>
<dbReference type="GO" id="GO:0000062">
    <property type="term" value="F:fatty-acyl-CoA binding"/>
    <property type="evidence" value="ECO:0007669"/>
    <property type="project" value="InterPro"/>
</dbReference>
<dbReference type="GO" id="GO:0006631">
    <property type="term" value="P:fatty acid metabolic process"/>
    <property type="evidence" value="ECO:0007669"/>
    <property type="project" value="UniProtKB-KW"/>
</dbReference>
<dbReference type="GO" id="GO:0071072">
    <property type="term" value="P:negative regulation of phospholipid biosynthetic process"/>
    <property type="evidence" value="ECO:0000315"/>
    <property type="project" value="CACAO"/>
</dbReference>
<dbReference type="GO" id="GO:0019217">
    <property type="term" value="P:regulation of fatty acid metabolic process"/>
    <property type="evidence" value="ECO:0007669"/>
    <property type="project" value="UniProtKB-UniRule"/>
</dbReference>
<dbReference type="CDD" id="cd07377">
    <property type="entry name" value="WHTH_GntR"/>
    <property type="match status" value="1"/>
</dbReference>
<dbReference type="Gene3D" id="1.20.120.530">
    <property type="entry name" value="GntR ligand-binding domain-like"/>
    <property type="match status" value="1"/>
</dbReference>
<dbReference type="Gene3D" id="1.10.10.10">
    <property type="entry name" value="Winged helix-like DNA-binding domain superfamily/Winged helix DNA-binding domain"/>
    <property type="match status" value="1"/>
</dbReference>
<dbReference type="HAMAP" id="MF_00696">
    <property type="entry name" value="HTH_FadR"/>
    <property type="match status" value="1"/>
</dbReference>
<dbReference type="InterPro" id="IPR014178">
    <property type="entry name" value="FA-response_TF_FadR"/>
</dbReference>
<dbReference type="InterPro" id="IPR028374">
    <property type="entry name" value="FadR_C"/>
</dbReference>
<dbReference type="InterPro" id="IPR008920">
    <property type="entry name" value="TF_FadR/GntR_C"/>
</dbReference>
<dbReference type="InterPro" id="IPR000524">
    <property type="entry name" value="Tscrpt_reg_HTH_GntR"/>
</dbReference>
<dbReference type="InterPro" id="IPR036388">
    <property type="entry name" value="WH-like_DNA-bd_sf"/>
</dbReference>
<dbReference type="InterPro" id="IPR036390">
    <property type="entry name" value="WH_DNA-bd_sf"/>
</dbReference>
<dbReference type="NCBIfam" id="TIGR02812">
    <property type="entry name" value="fadR_gamma"/>
    <property type="match status" value="1"/>
</dbReference>
<dbReference type="NCBIfam" id="NF003444">
    <property type="entry name" value="PRK04984.1"/>
    <property type="match status" value="1"/>
</dbReference>
<dbReference type="PANTHER" id="PTHR43537:SF52">
    <property type="entry name" value="FATTY ACID METABOLISM REGULATOR PROTEIN"/>
    <property type="match status" value="1"/>
</dbReference>
<dbReference type="PANTHER" id="PTHR43537">
    <property type="entry name" value="TRANSCRIPTIONAL REGULATOR, GNTR FAMILY"/>
    <property type="match status" value="1"/>
</dbReference>
<dbReference type="Pfam" id="PF07840">
    <property type="entry name" value="FadR_C"/>
    <property type="match status" value="1"/>
</dbReference>
<dbReference type="Pfam" id="PF00392">
    <property type="entry name" value="GntR"/>
    <property type="match status" value="1"/>
</dbReference>
<dbReference type="PRINTS" id="PR00035">
    <property type="entry name" value="HTHGNTR"/>
</dbReference>
<dbReference type="SMART" id="SM00345">
    <property type="entry name" value="HTH_GNTR"/>
    <property type="match status" value="1"/>
</dbReference>
<dbReference type="SUPFAM" id="SSF48008">
    <property type="entry name" value="GntR ligand-binding domain-like"/>
    <property type="match status" value="1"/>
</dbReference>
<dbReference type="SUPFAM" id="SSF46785">
    <property type="entry name" value="Winged helix' DNA-binding domain"/>
    <property type="match status" value="1"/>
</dbReference>
<dbReference type="PROSITE" id="PS50949">
    <property type="entry name" value="HTH_GNTR"/>
    <property type="match status" value="1"/>
</dbReference>
<gene>
    <name evidence="1" type="primary">fadR</name>
    <name type="ordered locus">VC_1900</name>
</gene>
<evidence type="ECO:0000255" key="1">
    <source>
        <dbReference type="HAMAP-Rule" id="MF_00696"/>
    </source>
</evidence>
<evidence type="ECO:0007829" key="2">
    <source>
        <dbReference type="PDB" id="4P9U"/>
    </source>
</evidence>
<evidence type="ECO:0007829" key="3">
    <source>
        <dbReference type="PDB" id="4PDK"/>
    </source>
</evidence>
<comment type="function">
    <text evidence="1">Multifunctional regulator of fatty acid metabolism.</text>
</comment>
<comment type="subunit">
    <text evidence="1">Homodimer.</text>
</comment>
<comment type="subcellular location">
    <subcellularLocation>
        <location evidence="1">Cytoplasm</location>
    </subcellularLocation>
</comment>
<sequence length="279" mass="31998">MVIKAKSPAGFAEKYIIESIWNGRFPPGSILPAERELSELIGVTRTTLREVLQRLARDGWLTIQHGKPTKVNQFMETSGLHILDTLMTLDAENATSIVEDLLAARTNISPIFMRYAFKLNKESAERIMINVIESCEALVNAPSWDAFIAASPYAEKIQQHVKEDSEKDELKRQEILIAKTFNFYDYMLFQRLAFHSGNQIYGLIFNGLKKLYDRVGSYYFSNPQARELAMEFYRQLLAVCQSGEREHLPQVIRQYGIASGHIWNQMKMTLPSNFTEDDC</sequence>
<protein>
    <recommendedName>
        <fullName evidence="1">Fatty acid metabolism regulator protein</fullName>
    </recommendedName>
</protein>
<accession>Q9KQU8</accession>